<name>SYC_AZOVD</name>
<feature type="chain" id="PRO_1000202114" description="Cysteine--tRNA ligase">
    <location>
        <begin position="1"/>
        <end position="461"/>
    </location>
</feature>
<feature type="short sequence motif" description="'HIGH' region">
    <location>
        <begin position="31"/>
        <end position="41"/>
    </location>
</feature>
<feature type="short sequence motif" description="'KMSKS' region">
    <location>
        <begin position="267"/>
        <end position="271"/>
    </location>
</feature>
<feature type="binding site" evidence="1">
    <location>
        <position position="29"/>
    </location>
    <ligand>
        <name>Zn(2+)</name>
        <dbReference type="ChEBI" id="CHEBI:29105"/>
    </ligand>
</feature>
<feature type="binding site" evidence="1">
    <location>
        <position position="210"/>
    </location>
    <ligand>
        <name>Zn(2+)</name>
        <dbReference type="ChEBI" id="CHEBI:29105"/>
    </ligand>
</feature>
<feature type="binding site" evidence="1">
    <location>
        <position position="235"/>
    </location>
    <ligand>
        <name>Zn(2+)</name>
        <dbReference type="ChEBI" id="CHEBI:29105"/>
    </ligand>
</feature>
<feature type="binding site" evidence="1">
    <location>
        <position position="239"/>
    </location>
    <ligand>
        <name>Zn(2+)</name>
        <dbReference type="ChEBI" id="CHEBI:29105"/>
    </ligand>
</feature>
<feature type="binding site" evidence="1">
    <location>
        <position position="270"/>
    </location>
    <ligand>
        <name>ATP</name>
        <dbReference type="ChEBI" id="CHEBI:30616"/>
    </ligand>
</feature>
<comment type="catalytic activity">
    <reaction evidence="1">
        <text>tRNA(Cys) + L-cysteine + ATP = L-cysteinyl-tRNA(Cys) + AMP + diphosphate</text>
        <dbReference type="Rhea" id="RHEA:17773"/>
        <dbReference type="Rhea" id="RHEA-COMP:9661"/>
        <dbReference type="Rhea" id="RHEA-COMP:9679"/>
        <dbReference type="ChEBI" id="CHEBI:30616"/>
        <dbReference type="ChEBI" id="CHEBI:33019"/>
        <dbReference type="ChEBI" id="CHEBI:35235"/>
        <dbReference type="ChEBI" id="CHEBI:78442"/>
        <dbReference type="ChEBI" id="CHEBI:78517"/>
        <dbReference type="ChEBI" id="CHEBI:456215"/>
        <dbReference type="EC" id="6.1.1.16"/>
    </reaction>
</comment>
<comment type="cofactor">
    <cofactor evidence="1">
        <name>Zn(2+)</name>
        <dbReference type="ChEBI" id="CHEBI:29105"/>
    </cofactor>
    <text evidence="1">Binds 1 zinc ion per subunit.</text>
</comment>
<comment type="subunit">
    <text evidence="1">Monomer.</text>
</comment>
<comment type="subcellular location">
    <subcellularLocation>
        <location evidence="1">Cytoplasm</location>
    </subcellularLocation>
</comment>
<comment type="similarity">
    <text evidence="1">Belongs to the class-I aminoacyl-tRNA synthetase family.</text>
</comment>
<protein>
    <recommendedName>
        <fullName evidence="1">Cysteine--tRNA ligase</fullName>
        <ecNumber evidence="1">6.1.1.16</ecNumber>
    </recommendedName>
    <alternativeName>
        <fullName evidence="1">Cysteinyl-tRNA synthetase</fullName>
        <shortName evidence="1">CysRS</shortName>
    </alternativeName>
</protein>
<evidence type="ECO:0000255" key="1">
    <source>
        <dbReference type="HAMAP-Rule" id="MF_00041"/>
    </source>
</evidence>
<organism>
    <name type="scientific">Azotobacter vinelandii (strain DJ / ATCC BAA-1303)</name>
    <dbReference type="NCBI Taxonomy" id="322710"/>
    <lineage>
        <taxon>Bacteria</taxon>
        <taxon>Pseudomonadati</taxon>
        <taxon>Pseudomonadota</taxon>
        <taxon>Gammaproteobacteria</taxon>
        <taxon>Pseudomonadales</taxon>
        <taxon>Pseudomonadaceae</taxon>
        <taxon>Azotobacter</taxon>
    </lineage>
</organism>
<reference key="1">
    <citation type="journal article" date="2009" name="J. Bacteriol.">
        <title>Genome sequence of Azotobacter vinelandii, an obligate aerobe specialized to support diverse anaerobic metabolic processes.</title>
        <authorList>
            <person name="Setubal J.C."/>
            <person name="Dos Santos P."/>
            <person name="Goldman B.S."/>
            <person name="Ertesvaag H."/>
            <person name="Espin G."/>
            <person name="Rubio L.M."/>
            <person name="Valla S."/>
            <person name="Almeida N.F."/>
            <person name="Balasubramanian D."/>
            <person name="Cromes L."/>
            <person name="Curatti L."/>
            <person name="Du Z."/>
            <person name="Godsy E."/>
            <person name="Goodner B."/>
            <person name="Hellner-Burris K."/>
            <person name="Hernandez J.A."/>
            <person name="Houmiel K."/>
            <person name="Imperial J."/>
            <person name="Kennedy C."/>
            <person name="Larson T.J."/>
            <person name="Latreille P."/>
            <person name="Ligon L.S."/>
            <person name="Lu J."/>
            <person name="Maerk M."/>
            <person name="Miller N.M."/>
            <person name="Norton S."/>
            <person name="O'Carroll I.P."/>
            <person name="Paulsen I."/>
            <person name="Raulfs E.C."/>
            <person name="Roemer R."/>
            <person name="Rosser J."/>
            <person name="Segura D."/>
            <person name="Slater S."/>
            <person name="Stricklin S.L."/>
            <person name="Studholme D.J."/>
            <person name="Sun J."/>
            <person name="Viana C.J."/>
            <person name="Wallin E."/>
            <person name="Wang B."/>
            <person name="Wheeler C."/>
            <person name="Zhu H."/>
            <person name="Dean D.R."/>
            <person name="Dixon R."/>
            <person name="Wood D."/>
        </authorList>
    </citation>
    <scope>NUCLEOTIDE SEQUENCE [LARGE SCALE GENOMIC DNA]</scope>
    <source>
        <strain>DJ / ATCC BAA-1303</strain>
    </source>
</reference>
<gene>
    <name evidence="1" type="primary">cysS</name>
    <name type="ordered locus">Avin_23530</name>
</gene>
<accession>C1DHE6</accession>
<sequence length="461" mass="51302">MTLSIYSTLSKGKEAFKPLEGNKVRMYVCGMTVYDFCHIGHARVMVAFDVVSRWLRHSGYDVTYVRNITDIDDKIIRRANENGESFQDLVGRMIAAMHEDEARLNVLRPDSEPRATDHIAGMHAMIRTLIDKSYAYAPGNGDVYYRVGKFEGYGKLSRRKIEDLKIGARIEPGEAKEDPLDFVLWKGAKPGEPSWESPWGAGRPGWHIECSVMSTCCLGETFDIHGGGPDLVFPHHENEIAQSEAATGKRYANIWMHAGAVRVDGEKMSKSLGNFFTIREVLEKYHPEVVRYLLVSSHYRSPINYSEDSLREARAALERFYNALKGLPAAQPTGGDEYVARFNAAMNDDFNTPEACAVLFELAREVNRLRDTDLQSAASLAARLKELGGLLGVLQLEPEAFLQAGAADRVDAAEVEALIAARLAARAGKNWAESDRIRDQLAAMGVLLEDGKNGTTWRLVD</sequence>
<proteinExistence type="inferred from homology"/>
<keyword id="KW-0030">Aminoacyl-tRNA synthetase</keyword>
<keyword id="KW-0067">ATP-binding</keyword>
<keyword id="KW-0963">Cytoplasm</keyword>
<keyword id="KW-0436">Ligase</keyword>
<keyword id="KW-0479">Metal-binding</keyword>
<keyword id="KW-0547">Nucleotide-binding</keyword>
<keyword id="KW-0648">Protein biosynthesis</keyword>
<keyword id="KW-0862">Zinc</keyword>
<dbReference type="EC" id="6.1.1.16" evidence="1"/>
<dbReference type="EMBL" id="CP001157">
    <property type="protein sequence ID" value="ACO78541.1"/>
    <property type="molecule type" value="Genomic_DNA"/>
</dbReference>
<dbReference type="RefSeq" id="WP_012700939.1">
    <property type="nucleotide sequence ID" value="NC_012560.1"/>
</dbReference>
<dbReference type="SMR" id="C1DHE6"/>
<dbReference type="STRING" id="322710.Avin_23530"/>
<dbReference type="EnsemblBacteria" id="ACO78541">
    <property type="protein sequence ID" value="ACO78541"/>
    <property type="gene ID" value="Avin_23530"/>
</dbReference>
<dbReference type="GeneID" id="88185537"/>
<dbReference type="KEGG" id="avn:Avin_23530"/>
<dbReference type="eggNOG" id="COG0215">
    <property type="taxonomic scope" value="Bacteria"/>
</dbReference>
<dbReference type="HOGENOM" id="CLU_013528_0_1_6"/>
<dbReference type="OrthoDB" id="9815130at2"/>
<dbReference type="Proteomes" id="UP000002424">
    <property type="component" value="Chromosome"/>
</dbReference>
<dbReference type="GO" id="GO:0005829">
    <property type="term" value="C:cytosol"/>
    <property type="evidence" value="ECO:0007669"/>
    <property type="project" value="TreeGrafter"/>
</dbReference>
<dbReference type="GO" id="GO:0005524">
    <property type="term" value="F:ATP binding"/>
    <property type="evidence" value="ECO:0007669"/>
    <property type="project" value="UniProtKB-UniRule"/>
</dbReference>
<dbReference type="GO" id="GO:0004817">
    <property type="term" value="F:cysteine-tRNA ligase activity"/>
    <property type="evidence" value="ECO:0007669"/>
    <property type="project" value="UniProtKB-UniRule"/>
</dbReference>
<dbReference type="GO" id="GO:0008270">
    <property type="term" value="F:zinc ion binding"/>
    <property type="evidence" value="ECO:0007669"/>
    <property type="project" value="UniProtKB-UniRule"/>
</dbReference>
<dbReference type="GO" id="GO:0006423">
    <property type="term" value="P:cysteinyl-tRNA aminoacylation"/>
    <property type="evidence" value="ECO:0007669"/>
    <property type="project" value="UniProtKB-UniRule"/>
</dbReference>
<dbReference type="CDD" id="cd07963">
    <property type="entry name" value="Anticodon_Ia_Cys"/>
    <property type="match status" value="1"/>
</dbReference>
<dbReference type="CDD" id="cd00672">
    <property type="entry name" value="CysRS_core"/>
    <property type="match status" value="1"/>
</dbReference>
<dbReference type="FunFam" id="3.40.50.620:FF:000009">
    <property type="entry name" value="Cysteine--tRNA ligase"/>
    <property type="match status" value="1"/>
</dbReference>
<dbReference type="Gene3D" id="1.20.120.1910">
    <property type="entry name" value="Cysteine-tRNA ligase, C-terminal anti-codon recognition domain"/>
    <property type="match status" value="1"/>
</dbReference>
<dbReference type="Gene3D" id="3.40.50.620">
    <property type="entry name" value="HUPs"/>
    <property type="match status" value="1"/>
</dbReference>
<dbReference type="HAMAP" id="MF_00041">
    <property type="entry name" value="Cys_tRNA_synth"/>
    <property type="match status" value="1"/>
</dbReference>
<dbReference type="InterPro" id="IPR015803">
    <property type="entry name" value="Cys-tRNA-ligase"/>
</dbReference>
<dbReference type="InterPro" id="IPR015273">
    <property type="entry name" value="Cys-tRNA-synt_Ia_DALR"/>
</dbReference>
<dbReference type="InterPro" id="IPR024909">
    <property type="entry name" value="Cys-tRNA/MSH_ligase"/>
</dbReference>
<dbReference type="InterPro" id="IPR056411">
    <property type="entry name" value="CysS_C"/>
</dbReference>
<dbReference type="InterPro" id="IPR014729">
    <property type="entry name" value="Rossmann-like_a/b/a_fold"/>
</dbReference>
<dbReference type="InterPro" id="IPR032678">
    <property type="entry name" value="tRNA-synt_1_cat_dom"/>
</dbReference>
<dbReference type="InterPro" id="IPR009080">
    <property type="entry name" value="tRNAsynth_Ia_anticodon-bd"/>
</dbReference>
<dbReference type="NCBIfam" id="TIGR00435">
    <property type="entry name" value="cysS"/>
    <property type="match status" value="1"/>
</dbReference>
<dbReference type="PANTHER" id="PTHR10890:SF3">
    <property type="entry name" value="CYSTEINE--TRNA LIGASE, CYTOPLASMIC"/>
    <property type="match status" value="1"/>
</dbReference>
<dbReference type="PANTHER" id="PTHR10890">
    <property type="entry name" value="CYSTEINYL-TRNA SYNTHETASE"/>
    <property type="match status" value="1"/>
</dbReference>
<dbReference type="Pfam" id="PF23493">
    <property type="entry name" value="CysS_C"/>
    <property type="match status" value="1"/>
</dbReference>
<dbReference type="Pfam" id="PF09190">
    <property type="entry name" value="DALR_2"/>
    <property type="match status" value="1"/>
</dbReference>
<dbReference type="Pfam" id="PF01406">
    <property type="entry name" value="tRNA-synt_1e"/>
    <property type="match status" value="1"/>
</dbReference>
<dbReference type="PRINTS" id="PR00983">
    <property type="entry name" value="TRNASYNTHCYS"/>
</dbReference>
<dbReference type="SMART" id="SM00840">
    <property type="entry name" value="DALR_2"/>
    <property type="match status" value="1"/>
</dbReference>
<dbReference type="SUPFAM" id="SSF47323">
    <property type="entry name" value="Anticodon-binding domain of a subclass of class I aminoacyl-tRNA synthetases"/>
    <property type="match status" value="1"/>
</dbReference>
<dbReference type="SUPFAM" id="SSF52374">
    <property type="entry name" value="Nucleotidylyl transferase"/>
    <property type="match status" value="1"/>
</dbReference>